<protein>
    <recommendedName>
        <fullName evidence="1">Tryptophan synthase beta chain</fullName>
        <ecNumber evidence="1">4.2.1.20</ecNumber>
    </recommendedName>
</protein>
<comment type="function">
    <text evidence="1">The beta subunit is responsible for the synthesis of L-tryptophan from indole and L-serine.</text>
</comment>
<comment type="catalytic activity">
    <reaction evidence="1">
        <text>(1S,2R)-1-C-(indol-3-yl)glycerol 3-phosphate + L-serine = D-glyceraldehyde 3-phosphate + L-tryptophan + H2O</text>
        <dbReference type="Rhea" id="RHEA:10532"/>
        <dbReference type="ChEBI" id="CHEBI:15377"/>
        <dbReference type="ChEBI" id="CHEBI:33384"/>
        <dbReference type="ChEBI" id="CHEBI:57912"/>
        <dbReference type="ChEBI" id="CHEBI:58866"/>
        <dbReference type="ChEBI" id="CHEBI:59776"/>
        <dbReference type="EC" id="4.2.1.20"/>
    </reaction>
</comment>
<comment type="cofactor">
    <cofactor evidence="1">
        <name>pyridoxal 5'-phosphate</name>
        <dbReference type="ChEBI" id="CHEBI:597326"/>
    </cofactor>
</comment>
<comment type="pathway">
    <text evidence="1">Amino-acid biosynthesis; L-tryptophan biosynthesis; L-tryptophan from chorismate: step 5/5.</text>
</comment>
<comment type="subunit">
    <text evidence="1">Tetramer of two alpha and two beta chains.</text>
</comment>
<comment type="similarity">
    <text evidence="1">Belongs to the TrpB family.</text>
</comment>
<gene>
    <name evidence="1" type="primary">trpB</name>
    <name type="ordered locus">Bpro_3616</name>
</gene>
<organism>
    <name type="scientific">Polaromonas sp. (strain JS666 / ATCC BAA-500)</name>
    <dbReference type="NCBI Taxonomy" id="296591"/>
    <lineage>
        <taxon>Bacteria</taxon>
        <taxon>Pseudomonadati</taxon>
        <taxon>Pseudomonadota</taxon>
        <taxon>Betaproteobacteria</taxon>
        <taxon>Burkholderiales</taxon>
        <taxon>Comamonadaceae</taxon>
        <taxon>Polaromonas</taxon>
    </lineage>
</organism>
<name>TRPB_POLSJ</name>
<keyword id="KW-0028">Amino-acid biosynthesis</keyword>
<keyword id="KW-0057">Aromatic amino acid biosynthesis</keyword>
<keyword id="KW-0456">Lyase</keyword>
<keyword id="KW-0663">Pyridoxal phosphate</keyword>
<keyword id="KW-1185">Reference proteome</keyword>
<keyword id="KW-0822">Tryptophan biosynthesis</keyword>
<sequence length="447" mass="48181">MFDYHQPDPTGHFGIYGGSFVSETLTHAINELKDAYAKYQNDPEFLAEFHSELAHFVGRPSPIYHAARMSREQGGAQIYLKREDLNHTGAHKINNTIGQAMLARRMGKTRIIAETGAGQHGVATATICARYGLECVVYMGSEDVKRQSPNVYRMKLLGATVVPVESGSKTLKDALNEAMRDWVANVDNTFYIIGTVAGPHPYPMMVRDFQSVIGTECLAQMPEFIGNRQPDAVIACVGGGSNAMGIFYPYIAHEETRLIGVEAAGEGLESGKHSASLQRGLPGVLHGNRTYVLQNDDGQVTETHSISAGLDYPGVGPEHAFLKDIGRAEYVGITDTEALEAFHYLCRTEGIIAALESSHAVAYAMKLAKTMRSDQSILVNLSGRGDKDIGTVADLSGADFYDRPSMRGLAVKGGEQPKEFSDGPPLGKLAPSGGSAVREATSVGARK</sequence>
<reference key="1">
    <citation type="journal article" date="2008" name="Appl. Environ. Microbiol.">
        <title>The genome of Polaromonas sp. strain JS666: insights into the evolution of a hydrocarbon- and xenobiotic-degrading bacterium, and features of relevance to biotechnology.</title>
        <authorList>
            <person name="Mattes T.E."/>
            <person name="Alexander A.K."/>
            <person name="Richardson P.M."/>
            <person name="Munk A.C."/>
            <person name="Han C.S."/>
            <person name="Stothard P."/>
            <person name="Coleman N.V."/>
        </authorList>
    </citation>
    <scope>NUCLEOTIDE SEQUENCE [LARGE SCALE GENOMIC DNA]</scope>
    <source>
        <strain>JS666 / ATCC BAA-500</strain>
    </source>
</reference>
<accession>Q126M1</accession>
<feature type="chain" id="PRO_1000076400" description="Tryptophan synthase beta chain">
    <location>
        <begin position="1"/>
        <end position="447"/>
    </location>
</feature>
<feature type="region of interest" description="Disordered" evidence="2">
    <location>
        <begin position="408"/>
        <end position="447"/>
    </location>
</feature>
<feature type="modified residue" description="N6-(pyridoxal phosphate)lysine" evidence="1">
    <location>
        <position position="92"/>
    </location>
</feature>
<dbReference type="EC" id="4.2.1.20" evidence="1"/>
<dbReference type="EMBL" id="CP000316">
    <property type="protein sequence ID" value="ABE45521.1"/>
    <property type="molecule type" value="Genomic_DNA"/>
</dbReference>
<dbReference type="RefSeq" id="WP_011484515.1">
    <property type="nucleotide sequence ID" value="NC_007948.1"/>
</dbReference>
<dbReference type="SMR" id="Q126M1"/>
<dbReference type="STRING" id="296591.Bpro_3616"/>
<dbReference type="KEGG" id="pol:Bpro_3616"/>
<dbReference type="eggNOG" id="COG0133">
    <property type="taxonomic scope" value="Bacteria"/>
</dbReference>
<dbReference type="HOGENOM" id="CLU_016734_3_1_4"/>
<dbReference type="OrthoDB" id="9766131at2"/>
<dbReference type="UniPathway" id="UPA00035">
    <property type="reaction ID" value="UER00044"/>
</dbReference>
<dbReference type="Proteomes" id="UP000001983">
    <property type="component" value="Chromosome"/>
</dbReference>
<dbReference type="GO" id="GO:0005737">
    <property type="term" value="C:cytoplasm"/>
    <property type="evidence" value="ECO:0007669"/>
    <property type="project" value="TreeGrafter"/>
</dbReference>
<dbReference type="GO" id="GO:0004834">
    <property type="term" value="F:tryptophan synthase activity"/>
    <property type="evidence" value="ECO:0007669"/>
    <property type="project" value="UniProtKB-UniRule"/>
</dbReference>
<dbReference type="CDD" id="cd06446">
    <property type="entry name" value="Trp-synth_B"/>
    <property type="match status" value="1"/>
</dbReference>
<dbReference type="FunFam" id="3.40.50.1100:FF:000001">
    <property type="entry name" value="Tryptophan synthase beta chain"/>
    <property type="match status" value="1"/>
</dbReference>
<dbReference type="FunFam" id="3.40.50.1100:FF:000004">
    <property type="entry name" value="Tryptophan synthase beta chain"/>
    <property type="match status" value="1"/>
</dbReference>
<dbReference type="Gene3D" id="3.40.50.1100">
    <property type="match status" value="2"/>
</dbReference>
<dbReference type="HAMAP" id="MF_00133">
    <property type="entry name" value="Trp_synth_beta"/>
    <property type="match status" value="1"/>
</dbReference>
<dbReference type="InterPro" id="IPR006653">
    <property type="entry name" value="Trp_synth_b_CS"/>
</dbReference>
<dbReference type="InterPro" id="IPR006654">
    <property type="entry name" value="Trp_synth_beta"/>
</dbReference>
<dbReference type="InterPro" id="IPR023026">
    <property type="entry name" value="Trp_synth_beta/beta-like"/>
</dbReference>
<dbReference type="InterPro" id="IPR001926">
    <property type="entry name" value="TrpB-like_PALP"/>
</dbReference>
<dbReference type="InterPro" id="IPR036052">
    <property type="entry name" value="TrpB-like_PALP_sf"/>
</dbReference>
<dbReference type="NCBIfam" id="TIGR00263">
    <property type="entry name" value="trpB"/>
    <property type="match status" value="1"/>
</dbReference>
<dbReference type="PANTHER" id="PTHR48077:SF3">
    <property type="entry name" value="TRYPTOPHAN SYNTHASE"/>
    <property type="match status" value="1"/>
</dbReference>
<dbReference type="PANTHER" id="PTHR48077">
    <property type="entry name" value="TRYPTOPHAN SYNTHASE-RELATED"/>
    <property type="match status" value="1"/>
</dbReference>
<dbReference type="Pfam" id="PF00291">
    <property type="entry name" value="PALP"/>
    <property type="match status" value="1"/>
</dbReference>
<dbReference type="PIRSF" id="PIRSF001413">
    <property type="entry name" value="Trp_syn_beta"/>
    <property type="match status" value="1"/>
</dbReference>
<dbReference type="SUPFAM" id="SSF53686">
    <property type="entry name" value="Tryptophan synthase beta subunit-like PLP-dependent enzymes"/>
    <property type="match status" value="1"/>
</dbReference>
<dbReference type="PROSITE" id="PS00168">
    <property type="entry name" value="TRP_SYNTHASE_BETA"/>
    <property type="match status" value="1"/>
</dbReference>
<proteinExistence type="inferred from homology"/>
<evidence type="ECO:0000255" key="1">
    <source>
        <dbReference type="HAMAP-Rule" id="MF_00133"/>
    </source>
</evidence>
<evidence type="ECO:0000256" key="2">
    <source>
        <dbReference type="SAM" id="MobiDB-lite"/>
    </source>
</evidence>